<reference key="1">
    <citation type="journal article" date="2005" name="J. Bacteriol.">
        <title>Insights on evolution of virulence and resistance from the complete genome analysis of an early methicillin-resistant Staphylococcus aureus strain and a biofilm-producing methicillin-resistant Staphylococcus epidermidis strain.</title>
        <authorList>
            <person name="Gill S.R."/>
            <person name="Fouts D.E."/>
            <person name="Archer G.L."/>
            <person name="Mongodin E.F."/>
            <person name="DeBoy R.T."/>
            <person name="Ravel J."/>
            <person name="Paulsen I.T."/>
            <person name="Kolonay J.F."/>
            <person name="Brinkac L.M."/>
            <person name="Beanan M.J."/>
            <person name="Dodson R.J."/>
            <person name="Daugherty S.C."/>
            <person name="Madupu R."/>
            <person name="Angiuoli S.V."/>
            <person name="Durkin A.S."/>
            <person name="Haft D.H."/>
            <person name="Vamathevan J.J."/>
            <person name="Khouri H."/>
            <person name="Utterback T.R."/>
            <person name="Lee C."/>
            <person name="Dimitrov G."/>
            <person name="Jiang L."/>
            <person name="Qin H."/>
            <person name="Weidman J."/>
            <person name="Tran K."/>
            <person name="Kang K.H."/>
            <person name="Hance I.R."/>
            <person name="Nelson K.E."/>
            <person name="Fraser C.M."/>
        </authorList>
    </citation>
    <scope>NUCLEOTIDE SEQUENCE [LARGE SCALE GENOMIC DNA]</scope>
    <source>
        <strain>ATCC 35984 / DSM 28319 / BCRC 17069 / CCUG 31568 / BM 3577 / RP62A</strain>
    </source>
</reference>
<dbReference type="EC" id="2.1.1.163" evidence="1"/>
<dbReference type="EMBL" id="CP000029">
    <property type="protein sequence ID" value="AAW54430.1"/>
    <property type="molecule type" value="Genomic_DNA"/>
</dbReference>
<dbReference type="RefSeq" id="WP_001831089.1">
    <property type="nucleotide sequence ID" value="NC_002976.3"/>
</dbReference>
<dbReference type="SMR" id="Q5HP74"/>
<dbReference type="STRING" id="176279.SERP1039"/>
<dbReference type="KEGG" id="ser:SERP1039"/>
<dbReference type="eggNOG" id="COG2226">
    <property type="taxonomic scope" value="Bacteria"/>
</dbReference>
<dbReference type="HOGENOM" id="CLU_037990_0_0_9"/>
<dbReference type="UniPathway" id="UPA00079">
    <property type="reaction ID" value="UER00169"/>
</dbReference>
<dbReference type="Proteomes" id="UP000000531">
    <property type="component" value="Chromosome"/>
</dbReference>
<dbReference type="GO" id="GO:0043770">
    <property type="term" value="F:demethylmenaquinone methyltransferase activity"/>
    <property type="evidence" value="ECO:0007669"/>
    <property type="project" value="UniProtKB-UniRule"/>
</dbReference>
<dbReference type="GO" id="GO:0009234">
    <property type="term" value="P:menaquinone biosynthetic process"/>
    <property type="evidence" value="ECO:0007669"/>
    <property type="project" value="UniProtKB-UniRule"/>
</dbReference>
<dbReference type="GO" id="GO:0032259">
    <property type="term" value="P:methylation"/>
    <property type="evidence" value="ECO:0007669"/>
    <property type="project" value="UniProtKB-KW"/>
</dbReference>
<dbReference type="CDD" id="cd02440">
    <property type="entry name" value="AdoMet_MTases"/>
    <property type="match status" value="1"/>
</dbReference>
<dbReference type="FunFam" id="3.40.50.150:FF:000086">
    <property type="entry name" value="Demethylmenaquinone methyltransferase"/>
    <property type="match status" value="1"/>
</dbReference>
<dbReference type="Gene3D" id="3.40.50.150">
    <property type="entry name" value="Vaccinia Virus protein VP39"/>
    <property type="match status" value="1"/>
</dbReference>
<dbReference type="HAMAP" id="MF_01813">
    <property type="entry name" value="MenG_UbiE_methyltr"/>
    <property type="match status" value="1"/>
</dbReference>
<dbReference type="InterPro" id="IPR029063">
    <property type="entry name" value="SAM-dependent_MTases_sf"/>
</dbReference>
<dbReference type="InterPro" id="IPR004033">
    <property type="entry name" value="UbiE/COQ5_MeTrFase"/>
</dbReference>
<dbReference type="InterPro" id="IPR023576">
    <property type="entry name" value="UbiE/COQ5_MeTrFase_CS"/>
</dbReference>
<dbReference type="NCBIfam" id="TIGR01934">
    <property type="entry name" value="MenG_MenH_UbiE"/>
    <property type="match status" value="1"/>
</dbReference>
<dbReference type="NCBIfam" id="NF001243">
    <property type="entry name" value="PRK00216.1-4"/>
    <property type="match status" value="1"/>
</dbReference>
<dbReference type="NCBIfam" id="NF001244">
    <property type="entry name" value="PRK00216.1-5"/>
    <property type="match status" value="1"/>
</dbReference>
<dbReference type="PANTHER" id="PTHR43591:SF24">
    <property type="entry name" value="2-METHOXY-6-POLYPRENYL-1,4-BENZOQUINOL METHYLASE, MITOCHONDRIAL"/>
    <property type="match status" value="1"/>
</dbReference>
<dbReference type="PANTHER" id="PTHR43591">
    <property type="entry name" value="METHYLTRANSFERASE"/>
    <property type="match status" value="1"/>
</dbReference>
<dbReference type="Pfam" id="PF01209">
    <property type="entry name" value="Ubie_methyltran"/>
    <property type="match status" value="1"/>
</dbReference>
<dbReference type="SUPFAM" id="SSF53335">
    <property type="entry name" value="S-adenosyl-L-methionine-dependent methyltransferases"/>
    <property type="match status" value="1"/>
</dbReference>
<dbReference type="PROSITE" id="PS51608">
    <property type="entry name" value="SAM_MT_UBIE"/>
    <property type="match status" value="1"/>
</dbReference>
<dbReference type="PROSITE" id="PS01183">
    <property type="entry name" value="UBIE_1"/>
    <property type="match status" value="1"/>
</dbReference>
<dbReference type="PROSITE" id="PS01184">
    <property type="entry name" value="UBIE_2"/>
    <property type="match status" value="1"/>
</dbReference>
<keyword id="KW-0474">Menaquinone biosynthesis</keyword>
<keyword id="KW-0489">Methyltransferase</keyword>
<keyword id="KW-1185">Reference proteome</keyword>
<keyword id="KW-0949">S-adenosyl-L-methionine</keyword>
<keyword id="KW-0808">Transferase</keyword>
<gene>
    <name evidence="1" type="primary">menG</name>
    <name type="ordered locus">SERP1039</name>
</gene>
<sequence>MAENQAKKEQVHTVFQNISQKYDRLNNIISFEQHKVWRKHVMSTMNVQKGSKALDVCCGTADWTIALSEAVGSKGQVTGLDFSENMLEVGKQKTASLENIQLVHGDAMNLPFDDNSFDYVTIGFGLRNVPDYLSALKEMHRVLKPGGMVVCLETSQPTLPLFKQIYSLYFKFVMPIFGKMFAKSKEEYEWLQQSTFNFPDKQTLKGLFFEAGFNDIIVRSFTGGVAAMHLGYKENSSSKGD</sequence>
<evidence type="ECO:0000255" key="1">
    <source>
        <dbReference type="HAMAP-Rule" id="MF_01813"/>
    </source>
</evidence>
<comment type="function">
    <text evidence="1">Methyltransferase required for the conversion of demethylmenaquinol (DMKH2) to menaquinol (MKH2).</text>
</comment>
<comment type="catalytic activity">
    <reaction evidence="1">
        <text>a 2-demethylmenaquinol + S-adenosyl-L-methionine = a menaquinol + S-adenosyl-L-homocysteine + H(+)</text>
        <dbReference type="Rhea" id="RHEA:42640"/>
        <dbReference type="Rhea" id="RHEA-COMP:9539"/>
        <dbReference type="Rhea" id="RHEA-COMP:9563"/>
        <dbReference type="ChEBI" id="CHEBI:15378"/>
        <dbReference type="ChEBI" id="CHEBI:18151"/>
        <dbReference type="ChEBI" id="CHEBI:55437"/>
        <dbReference type="ChEBI" id="CHEBI:57856"/>
        <dbReference type="ChEBI" id="CHEBI:59789"/>
        <dbReference type="EC" id="2.1.1.163"/>
    </reaction>
</comment>
<comment type="pathway">
    <text evidence="1">Quinol/quinone metabolism; menaquinone biosynthesis; menaquinol from 1,4-dihydroxy-2-naphthoate: step 2/2.</text>
</comment>
<comment type="similarity">
    <text evidence="1">Belongs to the class I-like SAM-binding methyltransferase superfamily. MenG/UbiE family.</text>
</comment>
<accession>Q5HP74</accession>
<proteinExistence type="inferred from homology"/>
<protein>
    <recommendedName>
        <fullName evidence="1">Demethylmenaquinone methyltransferase</fullName>
        <ecNumber evidence="1">2.1.1.163</ecNumber>
    </recommendedName>
</protein>
<feature type="chain" id="PRO_0000193334" description="Demethylmenaquinone methyltransferase">
    <location>
        <begin position="1"/>
        <end position="241"/>
    </location>
</feature>
<feature type="binding site" evidence="1">
    <location>
        <position position="60"/>
    </location>
    <ligand>
        <name>S-adenosyl-L-methionine</name>
        <dbReference type="ChEBI" id="CHEBI:59789"/>
    </ligand>
</feature>
<feature type="binding site" evidence="1">
    <location>
        <position position="81"/>
    </location>
    <ligand>
        <name>S-adenosyl-L-methionine</name>
        <dbReference type="ChEBI" id="CHEBI:59789"/>
    </ligand>
</feature>
<feature type="binding site" evidence="1">
    <location>
        <begin position="106"/>
        <end position="107"/>
    </location>
    <ligand>
        <name>S-adenosyl-L-methionine</name>
        <dbReference type="ChEBI" id="CHEBI:59789"/>
    </ligand>
</feature>
<name>MENG_STAEQ</name>
<organism>
    <name type="scientific">Staphylococcus epidermidis (strain ATCC 35984 / DSM 28319 / BCRC 17069 / CCUG 31568 / BM 3577 / RP62A)</name>
    <dbReference type="NCBI Taxonomy" id="176279"/>
    <lineage>
        <taxon>Bacteria</taxon>
        <taxon>Bacillati</taxon>
        <taxon>Bacillota</taxon>
        <taxon>Bacilli</taxon>
        <taxon>Bacillales</taxon>
        <taxon>Staphylococcaceae</taxon>
        <taxon>Staphylococcus</taxon>
    </lineage>
</organism>